<accession>Q3SZE9</accession>
<comment type="function">
    <text evidence="1">Tubulin-folding protein; involved in the final step of the tubulin folding pathway.</text>
</comment>
<comment type="subunit">
    <text evidence="1">Supercomplex made of cofactors A to E. Cofactors A and D function by capturing and stabilizing tubulin in a quasi-native conformation. Cofactor E binds to the cofactor D-tubulin complex; interaction with cofactor C then causes the release of tubulin polypeptides that are committed to the native state (By similarity).</text>
</comment>
<comment type="subcellular location">
    <subcellularLocation>
        <location evidence="1">Cytoplasm</location>
    </subcellularLocation>
    <text evidence="1">Detected predominantly in the photoreceptor connecting cilium.</text>
</comment>
<comment type="similarity">
    <text evidence="5">Belongs to the TBCC family.</text>
</comment>
<evidence type="ECO:0000250" key="1"/>
<evidence type="ECO:0000250" key="2">
    <source>
        <dbReference type="UniProtKB" id="Q15814"/>
    </source>
</evidence>
<evidence type="ECO:0000255" key="3">
    <source>
        <dbReference type="PROSITE-ProRule" id="PRU00659"/>
    </source>
</evidence>
<evidence type="ECO:0000256" key="4">
    <source>
        <dbReference type="SAM" id="MobiDB-lite"/>
    </source>
</evidence>
<evidence type="ECO:0000305" key="5"/>
<sequence>METGGLSAAALANGDLGSQRERTLVPERLQKREHERQLEVERRKQKRQDQEVEEEKSDFFAAAFARERSAVEELLESGESVERLEEAAARLQGLQKLINDSVLFLAAYDLRQAQEVLARLQAALAKRRQELQPKKRFAFKTRKKDAASATQVASAPDAPAAEGSLTSPPPLKEEGDFDSSWICGFSNLQSQVLEKRAEELHQQDVLLTQLRNCTIKLYGNPNTLRLTKAQGCTLLCGPVSTSVFLEDCSDCVLAVACQQLRVHTTKDTRIFLQVTSRAIMEDCTGIQFAPYTWSYPGIDKDFEGSGLDKNKNNWNDVDDFNWLARDVASPNWNVLPEEERRIQWD</sequence>
<protein>
    <recommendedName>
        <fullName>Tubulin-specific chaperone C</fullName>
    </recommendedName>
    <alternativeName>
        <fullName>Tubulin-folding cofactor C</fullName>
        <shortName>CFC</shortName>
    </alternativeName>
</protein>
<proteinExistence type="evidence at transcript level"/>
<feature type="chain" id="PRO_0000285106" description="Tubulin-specific chaperone C">
    <location>
        <begin position="1"/>
        <end position="345"/>
    </location>
</feature>
<feature type="domain" description="C-CAP/cofactor C-like" evidence="3">
    <location>
        <begin position="170"/>
        <end position="322"/>
    </location>
</feature>
<feature type="region of interest" description="Disordered" evidence="4">
    <location>
        <begin position="1"/>
        <end position="56"/>
    </location>
</feature>
<feature type="region of interest" description="Disordered" evidence="4">
    <location>
        <begin position="139"/>
        <end position="170"/>
    </location>
</feature>
<feature type="compositionally biased region" description="Basic and acidic residues" evidence="4">
    <location>
        <begin position="18"/>
        <end position="50"/>
    </location>
</feature>
<feature type="modified residue" description="N-acetylmethionine" evidence="2">
    <location>
        <position position="1"/>
    </location>
</feature>
<feature type="modified residue" description="Phosphoserine" evidence="2">
    <location>
        <position position="80"/>
    </location>
</feature>
<feature type="modified residue" description="Phosphoserine" evidence="2">
    <location>
        <position position="167"/>
    </location>
</feature>
<gene>
    <name type="primary">TBCC</name>
</gene>
<keyword id="KW-0007">Acetylation</keyword>
<keyword id="KW-0143">Chaperone</keyword>
<keyword id="KW-0963">Cytoplasm</keyword>
<keyword id="KW-0597">Phosphoprotein</keyword>
<keyword id="KW-1185">Reference proteome</keyword>
<reference key="1">
    <citation type="submission" date="2005-08" db="EMBL/GenBank/DDBJ databases">
        <authorList>
            <consortium name="NIH - Mammalian Gene Collection (MGC) project"/>
        </authorList>
    </citation>
    <scope>NUCLEOTIDE SEQUENCE [LARGE SCALE MRNA]</scope>
    <source>
        <strain>Hereford</strain>
        <tissue>Hypothalamus</tissue>
    </source>
</reference>
<organism>
    <name type="scientific">Bos taurus</name>
    <name type="common">Bovine</name>
    <dbReference type="NCBI Taxonomy" id="9913"/>
    <lineage>
        <taxon>Eukaryota</taxon>
        <taxon>Metazoa</taxon>
        <taxon>Chordata</taxon>
        <taxon>Craniata</taxon>
        <taxon>Vertebrata</taxon>
        <taxon>Euteleostomi</taxon>
        <taxon>Mammalia</taxon>
        <taxon>Eutheria</taxon>
        <taxon>Laurasiatheria</taxon>
        <taxon>Artiodactyla</taxon>
        <taxon>Ruminantia</taxon>
        <taxon>Pecora</taxon>
        <taxon>Bovidae</taxon>
        <taxon>Bovinae</taxon>
        <taxon>Bos</taxon>
    </lineage>
</organism>
<name>TBCC_BOVIN</name>
<dbReference type="EMBL" id="BC102901">
    <property type="protein sequence ID" value="AAI02902.1"/>
    <property type="molecule type" value="mRNA"/>
</dbReference>
<dbReference type="RefSeq" id="NP_001069177.1">
    <property type="nucleotide sequence ID" value="NM_001075709.2"/>
</dbReference>
<dbReference type="SMR" id="Q3SZE9"/>
<dbReference type="FunCoup" id="Q3SZE9">
    <property type="interactions" value="2966"/>
</dbReference>
<dbReference type="STRING" id="9913.ENSBTAP00000001245"/>
<dbReference type="PaxDb" id="9913-ENSBTAP00000001245"/>
<dbReference type="Ensembl" id="ENSBTAT00000001245.5">
    <property type="protein sequence ID" value="ENSBTAP00000001245.3"/>
    <property type="gene ID" value="ENSBTAG00000000940.5"/>
</dbReference>
<dbReference type="Ensembl" id="ENSBTAT00000132216.1">
    <property type="protein sequence ID" value="ENSBTAP00000082897.1"/>
    <property type="gene ID" value="ENSBTAG00000000940.5"/>
</dbReference>
<dbReference type="GeneID" id="515354"/>
<dbReference type="KEGG" id="bta:515354"/>
<dbReference type="CTD" id="6903"/>
<dbReference type="VEuPathDB" id="HostDB:ENSBTAG00000000940"/>
<dbReference type="VGNC" id="VGNC:35650">
    <property type="gene designation" value="TBCC"/>
</dbReference>
<dbReference type="eggNOG" id="KOG2512">
    <property type="taxonomic scope" value="Eukaryota"/>
</dbReference>
<dbReference type="GeneTree" id="ENSGT00940000162058"/>
<dbReference type="HOGENOM" id="CLU_032612_2_1_1"/>
<dbReference type="InParanoid" id="Q3SZE9"/>
<dbReference type="OMA" id="YFQHEIT"/>
<dbReference type="OrthoDB" id="194775at2759"/>
<dbReference type="TreeFam" id="TF105832"/>
<dbReference type="Proteomes" id="UP000009136">
    <property type="component" value="Chromosome 23"/>
</dbReference>
<dbReference type="Bgee" id="ENSBTAG00000000940">
    <property type="expression patterns" value="Expressed in pharyngeal tonsil and 106 other cell types or tissues"/>
</dbReference>
<dbReference type="GO" id="GO:0005737">
    <property type="term" value="C:cytoplasm"/>
    <property type="evidence" value="ECO:0000318"/>
    <property type="project" value="GO_Central"/>
</dbReference>
<dbReference type="GO" id="GO:0005829">
    <property type="term" value="C:cytosol"/>
    <property type="evidence" value="ECO:0000304"/>
    <property type="project" value="Reactome"/>
</dbReference>
<dbReference type="GO" id="GO:0005783">
    <property type="term" value="C:endoplasmic reticulum"/>
    <property type="evidence" value="ECO:0007669"/>
    <property type="project" value="Ensembl"/>
</dbReference>
<dbReference type="GO" id="GO:0032391">
    <property type="term" value="C:photoreceptor connecting cilium"/>
    <property type="evidence" value="ECO:0000250"/>
    <property type="project" value="UniProtKB"/>
</dbReference>
<dbReference type="GO" id="GO:0003924">
    <property type="term" value="F:GTPase activity"/>
    <property type="evidence" value="ECO:0000250"/>
    <property type="project" value="UniProtKB"/>
</dbReference>
<dbReference type="GO" id="GO:0015631">
    <property type="term" value="F:tubulin binding"/>
    <property type="evidence" value="ECO:0007669"/>
    <property type="project" value="InterPro"/>
</dbReference>
<dbReference type="GO" id="GO:0007023">
    <property type="term" value="P:post-chaperonin tubulin folding pathway"/>
    <property type="evidence" value="ECO:0007669"/>
    <property type="project" value="Ensembl"/>
</dbReference>
<dbReference type="GO" id="GO:0006457">
    <property type="term" value="P:protein folding"/>
    <property type="evidence" value="ECO:0000318"/>
    <property type="project" value="GO_Central"/>
</dbReference>
<dbReference type="GO" id="GO:0007021">
    <property type="term" value="P:tubulin complex assembly"/>
    <property type="evidence" value="ECO:0000318"/>
    <property type="project" value="GO_Central"/>
</dbReference>
<dbReference type="FunFam" id="1.20.58.1250:FF:000001">
    <property type="entry name" value="Tubulin-specific chaperone C"/>
    <property type="match status" value="1"/>
</dbReference>
<dbReference type="FunFam" id="2.160.20.70:FF:000007">
    <property type="entry name" value="tubulin-specific chaperone C"/>
    <property type="match status" value="1"/>
</dbReference>
<dbReference type="Gene3D" id="2.160.20.70">
    <property type="match status" value="1"/>
</dbReference>
<dbReference type="Gene3D" id="1.20.58.1250">
    <property type="entry name" value="Tubulin Binding Cofactor C, N-terminal domain"/>
    <property type="match status" value="1"/>
</dbReference>
<dbReference type="InterPro" id="IPR017901">
    <property type="entry name" value="C-CAP_CF_C-like"/>
</dbReference>
<dbReference type="InterPro" id="IPR016098">
    <property type="entry name" value="CAP/MinC_C"/>
</dbReference>
<dbReference type="InterPro" id="IPR006599">
    <property type="entry name" value="CARP_motif"/>
</dbReference>
<dbReference type="InterPro" id="IPR027684">
    <property type="entry name" value="TBCC"/>
</dbReference>
<dbReference type="InterPro" id="IPR031925">
    <property type="entry name" value="TBCC_N"/>
</dbReference>
<dbReference type="InterPro" id="IPR038397">
    <property type="entry name" value="TBCC_N_sf"/>
</dbReference>
<dbReference type="InterPro" id="IPR012945">
    <property type="entry name" value="Tubulin-bd_cofactor_C_dom"/>
</dbReference>
<dbReference type="PANTHER" id="PTHR15139">
    <property type="entry name" value="TUBULIN FOLDING COFACTOR C"/>
    <property type="match status" value="1"/>
</dbReference>
<dbReference type="PANTHER" id="PTHR15139:SF0">
    <property type="entry name" value="TUBULIN-SPECIFIC CHAPERONE C"/>
    <property type="match status" value="1"/>
</dbReference>
<dbReference type="Pfam" id="PF07986">
    <property type="entry name" value="TBCC"/>
    <property type="match status" value="1"/>
</dbReference>
<dbReference type="Pfam" id="PF16752">
    <property type="entry name" value="TBCC_N"/>
    <property type="match status" value="1"/>
</dbReference>
<dbReference type="SMART" id="SM00673">
    <property type="entry name" value="CARP"/>
    <property type="match status" value="2"/>
</dbReference>
<dbReference type="PROSITE" id="PS51329">
    <property type="entry name" value="C_CAP_COFACTOR_C"/>
    <property type="match status" value="1"/>
</dbReference>